<evidence type="ECO:0000250" key="1"/>
<evidence type="ECO:0000305" key="2"/>
<name>MED18_XENTR</name>
<comment type="function">
    <text evidence="1">Component of the Mediator complex, a coactivator involved in the regulated transcription of nearly all RNA polymerase II-dependent genes. Mediator functions as a bridge to convey information from gene-specific regulatory proteins to the basal RNA polymerase II transcription machinery. Mediator is recruited to promoters by direct interactions with regulatory proteins and serves as a scaffold for the assembly of a functional preinitiation complex with RNA polymerase II and the general transcription factors (By similarity).</text>
</comment>
<comment type="subunit">
    <text evidence="1">Component of the Mediator complex.</text>
</comment>
<comment type="subcellular location">
    <subcellularLocation>
        <location evidence="2">Nucleus</location>
    </subcellularLocation>
</comment>
<comment type="similarity">
    <text evidence="2">Belongs to the Mediator complex subunit 18 family.</text>
</comment>
<feature type="chain" id="PRO_0000304746" description="Mediator of RNA polymerase II transcription subunit 18">
    <location>
        <begin position="1"/>
        <end position="208"/>
    </location>
</feature>
<gene>
    <name type="primary">med18</name>
    <name type="ORF">TEgg017e01.1</name>
</gene>
<protein>
    <recommendedName>
        <fullName>Mediator of RNA polymerase II transcription subunit 18</fullName>
    </recommendedName>
    <alternativeName>
        <fullName>Mediator complex subunit 18</fullName>
    </alternativeName>
</protein>
<reference key="1">
    <citation type="submission" date="2006-10" db="EMBL/GenBank/DDBJ databases">
        <authorList>
            <consortium name="Sanger Xenopus tropicalis EST/cDNA project"/>
        </authorList>
    </citation>
    <scope>NUCLEOTIDE SEQUENCE [LARGE SCALE MRNA]</scope>
    <source>
        <tissue>Embryo</tissue>
    </source>
</reference>
<dbReference type="EMBL" id="CR761425">
    <property type="protein sequence ID" value="CAJ82247.1"/>
    <property type="molecule type" value="mRNA"/>
</dbReference>
<dbReference type="RefSeq" id="NP_001017086.1">
    <property type="nucleotide sequence ID" value="NM_001017086.2"/>
</dbReference>
<dbReference type="RefSeq" id="XP_017946763.1">
    <property type="nucleotide sequence ID" value="XM_018091274.2"/>
</dbReference>
<dbReference type="SMR" id="Q28GE1"/>
<dbReference type="FunCoup" id="Q28GE1">
    <property type="interactions" value="2340"/>
</dbReference>
<dbReference type="STRING" id="8364.ENSXETP00000024235"/>
<dbReference type="PaxDb" id="8364-ENSXETP00000062949"/>
<dbReference type="GeneID" id="549840"/>
<dbReference type="KEGG" id="xtr:549840"/>
<dbReference type="AGR" id="Xenbase:XB-GENE-1002158"/>
<dbReference type="CTD" id="54797"/>
<dbReference type="Xenbase" id="XB-GENE-1002158">
    <property type="gene designation" value="med18"/>
</dbReference>
<dbReference type="eggNOG" id="KOG3264">
    <property type="taxonomic scope" value="Eukaryota"/>
</dbReference>
<dbReference type="HOGENOM" id="CLU_084570_0_0_1"/>
<dbReference type="InParanoid" id="Q28GE1"/>
<dbReference type="OMA" id="ARGYMFR"/>
<dbReference type="OrthoDB" id="10018982at2759"/>
<dbReference type="PhylomeDB" id="Q28GE1"/>
<dbReference type="Proteomes" id="UP000008143">
    <property type="component" value="Chromosome 2"/>
</dbReference>
<dbReference type="Bgee" id="ENSXETG00000020654">
    <property type="expression patterns" value="Expressed in 2-cell stage embryo and 12 other cell types or tissues"/>
</dbReference>
<dbReference type="GO" id="GO:0016592">
    <property type="term" value="C:mediator complex"/>
    <property type="evidence" value="ECO:0007669"/>
    <property type="project" value="InterPro"/>
</dbReference>
<dbReference type="GO" id="GO:0003712">
    <property type="term" value="F:transcription coregulator activity"/>
    <property type="evidence" value="ECO:0007669"/>
    <property type="project" value="InterPro"/>
</dbReference>
<dbReference type="GO" id="GO:0006357">
    <property type="term" value="P:regulation of transcription by RNA polymerase II"/>
    <property type="evidence" value="ECO:0007669"/>
    <property type="project" value="InterPro"/>
</dbReference>
<dbReference type="FunFam" id="2.40.320.10:FF:000001">
    <property type="entry name" value="Mediator of RNA polymerase II transcription subunit 18"/>
    <property type="match status" value="1"/>
</dbReference>
<dbReference type="Gene3D" id="2.40.320.10">
    <property type="entry name" value="Hypothetical Protein Pfu-838710-001"/>
    <property type="match status" value="1"/>
</dbReference>
<dbReference type="InterPro" id="IPR019095">
    <property type="entry name" value="Mediator_Med18"/>
</dbReference>
<dbReference type="PANTHER" id="PTHR13321:SF2">
    <property type="entry name" value="MEDIATOR OF RNA POLYMERASE II TRANSCRIPTION SUBUNIT 18"/>
    <property type="match status" value="1"/>
</dbReference>
<dbReference type="PANTHER" id="PTHR13321">
    <property type="entry name" value="MEDIATOR OF RNA POLYMERASE II TRANSCRIPTION, SUBUNIT 18"/>
    <property type="match status" value="1"/>
</dbReference>
<dbReference type="Pfam" id="PF09637">
    <property type="entry name" value="Med18"/>
    <property type="match status" value="1"/>
</dbReference>
<accession>Q28GE1</accession>
<organism>
    <name type="scientific">Xenopus tropicalis</name>
    <name type="common">Western clawed frog</name>
    <name type="synonym">Silurana tropicalis</name>
    <dbReference type="NCBI Taxonomy" id="8364"/>
    <lineage>
        <taxon>Eukaryota</taxon>
        <taxon>Metazoa</taxon>
        <taxon>Chordata</taxon>
        <taxon>Craniata</taxon>
        <taxon>Vertebrata</taxon>
        <taxon>Euteleostomi</taxon>
        <taxon>Amphibia</taxon>
        <taxon>Batrachia</taxon>
        <taxon>Anura</taxon>
        <taxon>Pipoidea</taxon>
        <taxon>Pipidae</taxon>
        <taxon>Xenopodinae</taxon>
        <taxon>Xenopus</taxon>
        <taxon>Silurana</taxon>
    </lineage>
</organism>
<sequence>MEAPPVTTMPVSGGTINMMEYLLQGSILDQGLESLLHRLRGLCDNMEPETFADHESVYLLKGQQASPFVLRARRPLDRPGAPWHLRYLGQPEAGDRSRHTLVRNCVDIATSDVLPEFLQEMGFRMDHEFVARGHLFRKGVMKVAVYKVFRVLVAGAAEGAEPLSLSYLVELSAVAPAGQDNIADEVRGFAEQLRPLVQLEKIDPKRLM</sequence>
<keyword id="KW-0010">Activator</keyword>
<keyword id="KW-0539">Nucleus</keyword>
<keyword id="KW-1185">Reference proteome</keyword>
<keyword id="KW-0804">Transcription</keyword>
<keyword id="KW-0805">Transcription regulation</keyword>
<proteinExistence type="evidence at transcript level"/>